<feature type="chain" id="PRO_0000256686" description="NADH-ubiquinone oxidoreductase chain 4L">
    <location>
        <begin position="1"/>
        <end position="98"/>
    </location>
</feature>
<feature type="transmembrane region" description="Helical" evidence="3">
    <location>
        <begin position="2"/>
        <end position="22"/>
    </location>
</feature>
<feature type="transmembrane region" description="Helical" evidence="3">
    <location>
        <begin position="29"/>
        <end position="49"/>
    </location>
</feature>
<feature type="transmembrane region" description="Helical" evidence="3">
    <location>
        <begin position="61"/>
        <end position="81"/>
    </location>
</feature>
<gene>
    <name type="primary">MT-ND4L</name>
    <name type="synonym">MTND4L</name>
    <name type="synonym">NADH4L</name>
    <name type="synonym">ND4L</name>
</gene>
<dbReference type="EC" id="7.1.1.2"/>
<dbReference type="EMBL" id="AY582659">
    <property type="protein sequence ID" value="AAS92827.1"/>
    <property type="molecule type" value="Genomic_DNA"/>
</dbReference>
<dbReference type="EMBL" id="AY582660">
    <property type="protein sequence ID" value="AAS92831.1"/>
    <property type="molecule type" value="Genomic_DNA"/>
</dbReference>
<dbReference type="EMBL" id="AY582661">
    <property type="protein sequence ID" value="AAS92835.1"/>
    <property type="molecule type" value="Genomic_DNA"/>
</dbReference>
<dbReference type="SMR" id="Q591P2"/>
<dbReference type="GO" id="GO:0005743">
    <property type="term" value="C:mitochondrial inner membrane"/>
    <property type="evidence" value="ECO:0000250"/>
    <property type="project" value="UniProtKB"/>
</dbReference>
<dbReference type="GO" id="GO:0045271">
    <property type="term" value="C:respiratory chain complex I"/>
    <property type="evidence" value="ECO:0000250"/>
    <property type="project" value="UniProtKB"/>
</dbReference>
<dbReference type="GO" id="GO:0008137">
    <property type="term" value="F:NADH dehydrogenase (ubiquinone) activity"/>
    <property type="evidence" value="ECO:0000250"/>
    <property type="project" value="UniProtKB"/>
</dbReference>
<dbReference type="GO" id="GO:0042773">
    <property type="term" value="P:ATP synthesis coupled electron transport"/>
    <property type="evidence" value="ECO:0007669"/>
    <property type="project" value="InterPro"/>
</dbReference>
<dbReference type="FunFam" id="1.10.287.3510:FF:000002">
    <property type="entry name" value="NADH-ubiquinone oxidoreductase chain 4L"/>
    <property type="match status" value="1"/>
</dbReference>
<dbReference type="Gene3D" id="1.10.287.3510">
    <property type="match status" value="1"/>
</dbReference>
<dbReference type="InterPro" id="IPR001133">
    <property type="entry name" value="NADH_UbQ_OxRdtase_chain4L/K"/>
</dbReference>
<dbReference type="InterPro" id="IPR039428">
    <property type="entry name" value="NUOK/Mnh_C1-like"/>
</dbReference>
<dbReference type="PANTHER" id="PTHR11434:SF0">
    <property type="entry name" value="NADH-UBIQUINONE OXIDOREDUCTASE CHAIN 4L"/>
    <property type="match status" value="1"/>
</dbReference>
<dbReference type="PANTHER" id="PTHR11434">
    <property type="entry name" value="NADH-UBIQUINONE OXIDOREDUCTASE SUBUNIT ND4L"/>
    <property type="match status" value="1"/>
</dbReference>
<dbReference type="Pfam" id="PF00420">
    <property type="entry name" value="Oxidored_q2"/>
    <property type="match status" value="1"/>
</dbReference>
<sequence>MPSISINITLAFTAALLGMLMFRSHMMSSLLCLEGMMLSMFILSTLIILNTQFTMSFIMPILLLVFAACEAAIGLALLVMVSNTYGLDHIQNLNLLQC</sequence>
<comment type="function">
    <text evidence="1">Core subunit of the mitochondrial membrane respiratory chain NADH dehydrogenase (Complex I) which catalyzes electron transfer from NADH through the respiratory chain, using ubiquinone as an electron acceptor. Part of the enzyme membrane arm which is embedded in the lipid bilayer and involved in proton translocation.</text>
</comment>
<comment type="catalytic activity">
    <reaction evidence="1">
        <text>a ubiquinone + NADH + 5 H(+)(in) = a ubiquinol + NAD(+) + 4 H(+)(out)</text>
        <dbReference type="Rhea" id="RHEA:29091"/>
        <dbReference type="Rhea" id="RHEA-COMP:9565"/>
        <dbReference type="Rhea" id="RHEA-COMP:9566"/>
        <dbReference type="ChEBI" id="CHEBI:15378"/>
        <dbReference type="ChEBI" id="CHEBI:16389"/>
        <dbReference type="ChEBI" id="CHEBI:17976"/>
        <dbReference type="ChEBI" id="CHEBI:57540"/>
        <dbReference type="ChEBI" id="CHEBI:57945"/>
        <dbReference type="EC" id="7.1.1.2"/>
    </reaction>
    <physiologicalReaction direction="left-to-right" evidence="1">
        <dbReference type="Rhea" id="RHEA:29092"/>
    </physiologicalReaction>
</comment>
<comment type="subunit">
    <text evidence="2">Core subunit of respiratory chain NADH dehydrogenase (Complex I) which is composed of 45 different subunits.</text>
</comment>
<comment type="subcellular location">
    <subcellularLocation>
        <location evidence="2">Mitochondrion inner membrane</location>
        <topology evidence="3">Multi-pass membrane protein</topology>
    </subcellularLocation>
</comment>
<comment type="similarity">
    <text evidence="4">Belongs to the complex I subunit 4L family.</text>
</comment>
<reference key="1">
    <citation type="submission" date="2004-03" db="EMBL/GenBank/DDBJ databases">
        <title>Revision of the mouse lemurs (Primates, Microcebus) in Eastern Madagascar with the description of three new species.</title>
        <authorList>
            <person name="Louis E.E. Jr."/>
            <person name="Coles M.S."/>
            <person name="Andrianompohavana R."/>
            <person name="Sommer J.A."/>
            <person name="Mayor M.I."/>
            <person name="Brenneman R.A."/>
        </authorList>
    </citation>
    <scope>NUCLEOTIDE SEQUENCE [GENOMIC DNA]</scope>
    <source>
        <strain>Isolate PET41</strain>
        <strain>Isolate PET55</strain>
        <strain>Isolate PET62</strain>
    </source>
</reference>
<proteinExistence type="inferred from homology"/>
<protein>
    <recommendedName>
        <fullName>NADH-ubiquinone oxidoreductase chain 4L</fullName>
        <ecNumber>7.1.1.2</ecNumber>
    </recommendedName>
    <alternativeName>
        <fullName>NADH dehydrogenase subunit 4L</fullName>
    </alternativeName>
</protein>
<name>NU4LM_MICGI</name>
<geneLocation type="mitochondrion"/>
<evidence type="ECO:0000250" key="1">
    <source>
        <dbReference type="UniProtKB" id="P03901"/>
    </source>
</evidence>
<evidence type="ECO:0000250" key="2">
    <source>
        <dbReference type="UniProtKB" id="P03902"/>
    </source>
</evidence>
<evidence type="ECO:0000255" key="3"/>
<evidence type="ECO:0000305" key="4"/>
<organism>
    <name type="scientific">Microcebus griseorufus</name>
    <name type="common">Gray-brown mouse lemur</name>
    <dbReference type="NCBI Taxonomy" id="143354"/>
    <lineage>
        <taxon>Eukaryota</taxon>
        <taxon>Metazoa</taxon>
        <taxon>Chordata</taxon>
        <taxon>Craniata</taxon>
        <taxon>Vertebrata</taxon>
        <taxon>Euteleostomi</taxon>
        <taxon>Mammalia</taxon>
        <taxon>Eutheria</taxon>
        <taxon>Euarchontoglires</taxon>
        <taxon>Primates</taxon>
        <taxon>Strepsirrhini</taxon>
        <taxon>Lemuriformes</taxon>
        <taxon>Cheirogaleidae</taxon>
        <taxon>Microcebus</taxon>
    </lineage>
</organism>
<keyword id="KW-0249">Electron transport</keyword>
<keyword id="KW-0472">Membrane</keyword>
<keyword id="KW-0496">Mitochondrion</keyword>
<keyword id="KW-0999">Mitochondrion inner membrane</keyword>
<keyword id="KW-0520">NAD</keyword>
<keyword id="KW-0679">Respiratory chain</keyword>
<keyword id="KW-1278">Translocase</keyword>
<keyword id="KW-0812">Transmembrane</keyword>
<keyword id="KW-1133">Transmembrane helix</keyword>
<keyword id="KW-0813">Transport</keyword>
<keyword id="KW-0830">Ubiquinone</keyword>
<accession>Q591P2</accession>